<feature type="chain" id="PRO_0000202467" description="Protein DSF2">
    <location>
        <begin position="1"/>
        <end position="736"/>
    </location>
</feature>
<feature type="region of interest" description="Disordered" evidence="1">
    <location>
        <begin position="1"/>
        <end position="46"/>
    </location>
</feature>
<feature type="region of interest" description="Disordered" evidence="1">
    <location>
        <begin position="178"/>
        <end position="208"/>
    </location>
</feature>
<feature type="region of interest" description="Disordered" evidence="1">
    <location>
        <begin position="229"/>
        <end position="410"/>
    </location>
</feature>
<feature type="region of interest" description="Disordered" evidence="1">
    <location>
        <begin position="440"/>
        <end position="461"/>
    </location>
</feature>
<feature type="compositionally biased region" description="Polar residues" evidence="1">
    <location>
        <begin position="1"/>
        <end position="10"/>
    </location>
</feature>
<feature type="compositionally biased region" description="Basic and acidic residues" evidence="1">
    <location>
        <begin position="14"/>
        <end position="24"/>
    </location>
</feature>
<feature type="compositionally biased region" description="Polar residues" evidence="1">
    <location>
        <begin position="25"/>
        <end position="46"/>
    </location>
</feature>
<feature type="compositionally biased region" description="Polar residues" evidence="1">
    <location>
        <begin position="197"/>
        <end position="208"/>
    </location>
</feature>
<feature type="compositionally biased region" description="Low complexity" evidence="1">
    <location>
        <begin position="238"/>
        <end position="256"/>
    </location>
</feature>
<feature type="compositionally biased region" description="Polar residues" evidence="1">
    <location>
        <begin position="264"/>
        <end position="284"/>
    </location>
</feature>
<feature type="compositionally biased region" description="Low complexity" evidence="1">
    <location>
        <begin position="285"/>
        <end position="294"/>
    </location>
</feature>
<feature type="compositionally biased region" description="Low complexity" evidence="1">
    <location>
        <begin position="303"/>
        <end position="318"/>
    </location>
</feature>
<feature type="compositionally biased region" description="Low complexity" evidence="1">
    <location>
        <begin position="335"/>
        <end position="350"/>
    </location>
</feature>
<feature type="compositionally biased region" description="Basic residues" evidence="1">
    <location>
        <begin position="374"/>
        <end position="385"/>
    </location>
</feature>
<feature type="compositionally biased region" description="Polar residues" evidence="1">
    <location>
        <begin position="392"/>
        <end position="410"/>
    </location>
</feature>
<feature type="sequence conflict" description="In Ref. 1; CAA84944." evidence="4" ref="1">
    <original>S</original>
    <variation>R</variation>
    <location>
        <position position="205"/>
    </location>
</feature>
<feature type="sequence conflict" description="In Ref. 1; CAA84944." evidence="4" ref="1">
    <original>P</original>
    <variation>T</variation>
    <location>
        <position position="327"/>
    </location>
</feature>
<sequence>MNQNLKNTSWADRIGSDDQERKANSSEVSQSPPPNNSFESSMDSQFSYAHSNKSSISFESIQTTERLLDKLDLSLEDELILQEALLEEENASRNSQLSQTSGPTLCMPASEFPSLRYRTNPSPTYIQARDRSLIIDNLKEKDSTLRGKYSSGKVERHLPVKSRYSYIVEEDYDSETFSGMKPQMNRNEKDYKYPNLENGNRSTNSPNPFNFEKYRIENTRLHHLYPTLISDNNTSVDNNANSKNNRTTSNNINTSTKTDRISEKQSCPNEFTTTQKSNCLYRNGSSTSTNTSFSEVGQLSKPKTQSSFESESSSFSKLKLTKSDTTPIKPSPKRSNSSTSTITKTNTMTNDISLPPTPPYKAHKKKTSLNSLKKLFKSPRTRAKNKKDLESEGSSPIRSATNSLDFSGENIQLPSTSSTINNSSPHLARYIFPPNPVFHFKTASTPQSSTDKKKNSKARPNRTHLRTFSDFHTTEKDSKIGELSALTEQSNKPYHPKVRRRTLSLDGMLPNNSTQCMDSFSHKKEGSNATSKCGKLKFHPEPYDNDESSHIGQAITMRHQGKLEESAQRLKKACACGNKTAFLLYGLALRHGCGVDKNLKLSLGYLMAATDIKSFAAEVLDLDINPLNFASMDDIPDIAPEPTAPALYECGMAYLKGLGMDHPDERKGLKFLEKAALLGHVDSMCLSGTIWSKTSNVKKRDLARAAAWFRIADKKGANLLGSDWIYKEKYMKQGPK</sequence>
<reference key="1">
    <citation type="journal article" date="1994" name="EMBO J.">
        <title>Complete DNA sequence of yeast chromosome II.</title>
        <authorList>
            <person name="Feldmann H."/>
            <person name="Aigle M."/>
            <person name="Aljinovic G."/>
            <person name="Andre B."/>
            <person name="Baclet M.C."/>
            <person name="Barthe C."/>
            <person name="Baur A."/>
            <person name="Becam A.-M."/>
            <person name="Biteau N."/>
            <person name="Boles E."/>
            <person name="Brandt T."/>
            <person name="Brendel M."/>
            <person name="Brueckner M."/>
            <person name="Bussereau F."/>
            <person name="Christiansen C."/>
            <person name="Contreras R."/>
            <person name="Crouzet M."/>
            <person name="Cziepluch C."/>
            <person name="Demolis N."/>
            <person name="Delaveau T."/>
            <person name="Doignon F."/>
            <person name="Domdey H."/>
            <person name="Duesterhus S."/>
            <person name="Dubois E."/>
            <person name="Dujon B."/>
            <person name="El Bakkoury M."/>
            <person name="Entian K.-D."/>
            <person name="Feuermann M."/>
            <person name="Fiers W."/>
            <person name="Fobo G.M."/>
            <person name="Fritz C."/>
            <person name="Gassenhuber J."/>
            <person name="Glansdorff N."/>
            <person name="Goffeau A."/>
            <person name="Grivell L.A."/>
            <person name="de Haan M."/>
            <person name="Hein C."/>
            <person name="Herbert C.J."/>
            <person name="Hollenberg C.P."/>
            <person name="Holmstroem K."/>
            <person name="Jacq C."/>
            <person name="Jacquet M."/>
            <person name="Jauniaux J.-C."/>
            <person name="Jonniaux J.-L."/>
            <person name="Kallesoee T."/>
            <person name="Kiesau P."/>
            <person name="Kirchrath L."/>
            <person name="Koetter P."/>
            <person name="Korol S."/>
            <person name="Liebl S."/>
            <person name="Logghe M."/>
            <person name="Lohan A.J.E."/>
            <person name="Louis E.J."/>
            <person name="Li Z.Y."/>
            <person name="Maat M.J."/>
            <person name="Mallet L."/>
            <person name="Mannhaupt G."/>
            <person name="Messenguy F."/>
            <person name="Miosga T."/>
            <person name="Molemans F."/>
            <person name="Mueller S."/>
            <person name="Nasr F."/>
            <person name="Obermaier B."/>
            <person name="Perea J."/>
            <person name="Pierard A."/>
            <person name="Piravandi E."/>
            <person name="Pohl F.M."/>
            <person name="Pohl T.M."/>
            <person name="Potier S."/>
            <person name="Proft M."/>
            <person name="Purnelle B."/>
            <person name="Ramezani Rad M."/>
            <person name="Rieger M."/>
            <person name="Rose M."/>
            <person name="Schaaff-Gerstenschlaeger I."/>
            <person name="Scherens B."/>
            <person name="Schwarzlose C."/>
            <person name="Skala J."/>
            <person name="Slonimski P.P."/>
            <person name="Smits P.H.M."/>
            <person name="Souciet J.-L."/>
            <person name="Steensma H.Y."/>
            <person name="Stucka R."/>
            <person name="Urrestarazu L.A."/>
            <person name="van der Aart Q.J.M."/>
            <person name="Van Dyck L."/>
            <person name="Vassarotti A."/>
            <person name="Vetter I."/>
            <person name="Vierendeels F."/>
            <person name="Vissers S."/>
            <person name="Wagner G."/>
            <person name="de Wergifosse P."/>
            <person name="Wolfe K.H."/>
            <person name="Zagulski M."/>
            <person name="Zimmermann F.K."/>
            <person name="Mewes H.-W."/>
            <person name="Kleine K."/>
        </authorList>
    </citation>
    <scope>NUCLEOTIDE SEQUENCE [LARGE SCALE GENOMIC DNA]</scope>
    <source>
        <strain>ATCC 204508 / S288c</strain>
    </source>
</reference>
<reference key="2">
    <citation type="journal article" date="2014" name="G3 (Bethesda)">
        <title>The reference genome sequence of Saccharomyces cerevisiae: Then and now.</title>
        <authorList>
            <person name="Engel S.R."/>
            <person name="Dietrich F.S."/>
            <person name="Fisk D.G."/>
            <person name="Binkley G."/>
            <person name="Balakrishnan R."/>
            <person name="Costanzo M.C."/>
            <person name="Dwight S.S."/>
            <person name="Hitz B.C."/>
            <person name="Karra K."/>
            <person name="Nash R.S."/>
            <person name="Weng S."/>
            <person name="Wong E.D."/>
            <person name="Lloyd P."/>
            <person name="Skrzypek M.S."/>
            <person name="Miyasato S.R."/>
            <person name="Simison M."/>
            <person name="Cherry J.M."/>
        </authorList>
    </citation>
    <scope>GENOME REANNOTATION</scope>
    <scope>SEQUENCE REVISION TO 205 AND 327</scope>
    <source>
        <strain>ATCC 204508 / S288c</strain>
    </source>
</reference>
<reference key="3">
    <citation type="journal article" date="2003" name="Nature">
        <title>Global analysis of protein expression in yeast.</title>
        <authorList>
            <person name="Ghaemmaghami S."/>
            <person name="Huh W.-K."/>
            <person name="Bower K."/>
            <person name="Howson R.W."/>
            <person name="Belle A."/>
            <person name="Dephoure N."/>
            <person name="O'Shea E.K."/>
            <person name="Weissman J.S."/>
        </authorList>
    </citation>
    <scope>LEVEL OF PROTEIN EXPRESSION [LARGE SCALE ANALYSIS]</scope>
</reference>
<reference key="4">
    <citation type="journal article" date="2006" name="Mol. Genet. Genomics">
        <title>Suppressor analysis of the mpt5/htr1/uth4/puf5 deletion in Saccharomyces cerevisiae.</title>
        <authorList>
            <person name="Ohkuni K."/>
            <person name="Kikuchi Y."/>
            <person name="Hara K."/>
            <person name="Taneda T."/>
            <person name="Hayashi N."/>
            <person name="Kikuchi A."/>
        </authorList>
    </citation>
    <scope>DISRUPTION PHENOTYPE</scope>
</reference>
<reference key="5">
    <citation type="journal article" date="2008" name="Mol. Cell. Proteomics">
        <title>A multidimensional chromatography technology for in-depth phosphoproteome analysis.</title>
        <authorList>
            <person name="Albuquerque C.P."/>
            <person name="Smolka M.B."/>
            <person name="Payne S.H."/>
            <person name="Bafna V."/>
            <person name="Eng J."/>
            <person name="Zhou H."/>
        </authorList>
    </citation>
    <scope>IDENTIFICATION BY MASS SPECTROMETRY [LARGE SCALE ANALYSIS]</scope>
</reference>
<reference key="6">
    <citation type="journal article" date="2009" name="Science">
        <title>Global analysis of Cdk1 substrate phosphorylation sites provides insights into evolution.</title>
        <authorList>
            <person name="Holt L.J."/>
            <person name="Tuch B.B."/>
            <person name="Villen J."/>
            <person name="Johnson A.D."/>
            <person name="Gygi S.P."/>
            <person name="Morgan D.O."/>
        </authorList>
    </citation>
    <scope>IDENTIFICATION BY MASS SPECTROMETRY [LARGE SCALE ANALYSIS]</scope>
</reference>
<proteinExistence type="evidence at protein level"/>
<dbReference type="EMBL" id="Z35876">
    <property type="protein sequence ID" value="CAA84944.1"/>
    <property type="molecule type" value="Genomic_DNA"/>
</dbReference>
<dbReference type="EMBL" id="BK006936">
    <property type="protein sequence ID" value="DAA07128.2"/>
    <property type="molecule type" value="Genomic_DNA"/>
</dbReference>
<dbReference type="PIR" id="S45859">
    <property type="entry name" value="S45859"/>
</dbReference>
<dbReference type="RefSeq" id="NP_009561.2">
    <property type="nucleotide sequence ID" value="NM_001178355.2"/>
</dbReference>
<dbReference type="SMR" id="P38213"/>
<dbReference type="BioGRID" id="32708">
    <property type="interactions" value="53"/>
</dbReference>
<dbReference type="FunCoup" id="P38213">
    <property type="interactions" value="82"/>
</dbReference>
<dbReference type="IntAct" id="P38213">
    <property type="interactions" value="11"/>
</dbReference>
<dbReference type="MINT" id="P38213"/>
<dbReference type="STRING" id="4932.YBR007C"/>
<dbReference type="GlyGen" id="P38213">
    <property type="glycosylation" value="2 sites"/>
</dbReference>
<dbReference type="iPTMnet" id="P38213"/>
<dbReference type="PaxDb" id="4932-YBR007C"/>
<dbReference type="PeptideAtlas" id="P38213"/>
<dbReference type="EnsemblFungi" id="YBR007C_mRNA">
    <property type="protein sequence ID" value="YBR007C"/>
    <property type="gene ID" value="YBR007C"/>
</dbReference>
<dbReference type="GeneID" id="852292"/>
<dbReference type="KEGG" id="sce:YBR007C"/>
<dbReference type="AGR" id="SGD:S000000211"/>
<dbReference type="SGD" id="S000000211">
    <property type="gene designation" value="DSF2"/>
</dbReference>
<dbReference type="VEuPathDB" id="FungiDB:YBR007C"/>
<dbReference type="eggNOG" id="ENOG502QW3C">
    <property type="taxonomic scope" value="Eukaryota"/>
</dbReference>
<dbReference type="HOGENOM" id="CLU_364101_0_0_1"/>
<dbReference type="InParanoid" id="P38213"/>
<dbReference type="OMA" id="CLSGTIW"/>
<dbReference type="OrthoDB" id="2148946at2759"/>
<dbReference type="BioCyc" id="YEAST:G3O-28994-MONOMER"/>
<dbReference type="BioGRID-ORCS" id="852292">
    <property type="hits" value="1 hit in 10 CRISPR screens"/>
</dbReference>
<dbReference type="PRO" id="PR:P38213"/>
<dbReference type="Proteomes" id="UP000002311">
    <property type="component" value="Chromosome II"/>
</dbReference>
<dbReference type="RNAct" id="P38213">
    <property type="molecule type" value="protein"/>
</dbReference>
<dbReference type="GO" id="GO:0032153">
    <property type="term" value="C:cell division site"/>
    <property type="evidence" value="ECO:0000318"/>
    <property type="project" value="GO_Central"/>
</dbReference>
<dbReference type="GO" id="GO:0005934">
    <property type="term" value="C:cellular bud tip"/>
    <property type="evidence" value="ECO:0007005"/>
    <property type="project" value="SGD"/>
</dbReference>
<dbReference type="GO" id="GO:0010972">
    <property type="term" value="P:negative regulation of G2/M transition of mitotic cell cycle"/>
    <property type="evidence" value="ECO:0000318"/>
    <property type="project" value="GO_Central"/>
</dbReference>
<dbReference type="FunFam" id="1.25.40.10:FF:001245">
    <property type="entry name" value="Dsf2p"/>
    <property type="match status" value="1"/>
</dbReference>
<dbReference type="Gene3D" id="1.25.40.10">
    <property type="entry name" value="Tetratricopeptide repeat domain"/>
    <property type="match status" value="1"/>
</dbReference>
<dbReference type="InterPro" id="IPR052945">
    <property type="entry name" value="Mitotic_Regulator"/>
</dbReference>
<dbReference type="InterPro" id="IPR006597">
    <property type="entry name" value="Sel1-like"/>
</dbReference>
<dbReference type="InterPro" id="IPR011990">
    <property type="entry name" value="TPR-like_helical_dom_sf"/>
</dbReference>
<dbReference type="PANTHER" id="PTHR43628">
    <property type="entry name" value="ACTIVATOR OF C KINASE PROTEIN 1-RELATED"/>
    <property type="match status" value="1"/>
</dbReference>
<dbReference type="PANTHER" id="PTHR43628:SF11">
    <property type="entry name" value="PROTEIN DSF2"/>
    <property type="match status" value="1"/>
</dbReference>
<dbReference type="SMART" id="SM00671">
    <property type="entry name" value="SEL1"/>
    <property type="match status" value="1"/>
</dbReference>
<dbReference type="SUPFAM" id="SSF81901">
    <property type="entry name" value="HCP-like"/>
    <property type="match status" value="1"/>
</dbReference>
<keyword id="KW-1185">Reference proteome</keyword>
<evidence type="ECO:0000256" key="1">
    <source>
        <dbReference type="SAM" id="MobiDB-lite"/>
    </source>
</evidence>
<evidence type="ECO:0000269" key="2">
    <source>
    </source>
</evidence>
<evidence type="ECO:0000269" key="3">
    <source>
    </source>
</evidence>
<evidence type="ECO:0000305" key="4"/>
<name>DSF2_YEAST</name>
<accession>P38213</accession>
<accession>D6VQ08</accession>
<protein>
    <recommendedName>
        <fullName>Protein DSF2</fullName>
    </recommendedName>
    <alternativeName>
        <fullName>Deletion suppressor of MPT5 mutation protein 2</fullName>
    </alternativeName>
</protein>
<gene>
    <name type="primary">DSF2</name>
    <name type="ordered locus">YBR007C</name>
    <name type="ORF">YBR0113</name>
</gene>
<comment type="disruption phenotype">
    <text evidence="3">Rescues temperature-sensitivity of MPT5 deletion. Partially suppresses the hydroxyurea (HU) sensitivity of MPT5 deletion.</text>
</comment>
<comment type="miscellaneous">
    <text evidence="2">Present with 377 molecules/cell in log phase SD medium.</text>
</comment>
<organism>
    <name type="scientific">Saccharomyces cerevisiae (strain ATCC 204508 / S288c)</name>
    <name type="common">Baker's yeast</name>
    <dbReference type="NCBI Taxonomy" id="559292"/>
    <lineage>
        <taxon>Eukaryota</taxon>
        <taxon>Fungi</taxon>
        <taxon>Dikarya</taxon>
        <taxon>Ascomycota</taxon>
        <taxon>Saccharomycotina</taxon>
        <taxon>Saccharomycetes</taxon>
        <taxon>Saccharomycetales</taxon>
        <taxon>Saccharomycetaceae</taxon>
        <taxon>Saccharomyces</taxon>
    </lineage>
</organism>